<protein>
    <recommendedName>
        <fullName>Histone H1-like protein Hc1</fullName>
    </recommendedName>
    <alternativeName>
        <fullName>18 kDa histone analog</fullName>
    </alternativeName>
</protein>
<sequence>MALKDTAKKMTDLLESIQQNLLKAEKGNKAAAQRVRTESIKLEKTAKVYRKESIKAEKMGLMKKSKAAAKKAKAAAKKPVRATKTVAKKACTKRTCATKAKVKPTKKAAPKTKVKTAKKTRSTKK</sequence>
<feature type="initiator methionine" description="Removed" evidence="2">
    <location>
        <position position="1"/>
    </location>
</feature>
<feature type="chain" id="PRO_0000391797" description="Histone H1-like protein Hc1">
    <location>
        <begin position="2"/>
        <end position="125"/>
    </location>
</feature>
<feature type="region of interest" description="Disordered" evidence="1">
    <location>
        <begin position="98"/>
        <end position="125"/>
    </location>
</feature>
<feature type="compositionally biased region" description="Basic residues" evidence="1">
    <location>
        <begin position="100"/>
        <end position="125"/>
    </location>
</feature>
<reference key="1">
    <citation type="journal article" date="1991" name="J. Bacteriol.">
        <title>Identification and nucleotide sequence of a developmentally regulated gene encoding a eukaryotic histone H1-like protein from Chlamydia trachomatis.</title>
        <authorList>
            <person name="Tao S."/>
            <person name="Kaul R."/>
            <person name="Wenman W.M."/>
        </authorList>
    </citation>
    <scope>NUCLEOTIDE SEQUENCE [GENOMIC DNA]</scope>
    <scope>PROTEIN SEQUENCE OF 2-22</scope>
</reference>
<reference key="2">
    <citation type="journal article" date="1991" name="Proc. Natl. Acad. Sci. U.S.A.">
        <title>Chlamydia trachomatis developmentally regulated protein is homologous to eukaryotic histone H1.</title>
        <authorList>
            <person name="Hackstadt T."/>
            <person name="Baehr W."/>
            <person name="Ying Y."/>
        </authorList>
    </citation>
    <scope>NUCLEOTIDE SEQUENCE [GENOMIC DNA]</scope>
    <scope>PARTIAL PROTEIN SEQUENCE</scope>
</reference>
<reference key="3">
    <citation type="journal article" date="2008" name="Genome Res.">
        <title>Chlamydia trachomatis: genome sequence analysis of lymphogranuloma venereum isolates.</title>
        <authorList>
            <person name="Thomson N.R."/>
            <person name="Holden M.T.G."/>
            <person name="Carder C."/>
            <person name="Lennard N."/>
            <person name="Lockey S.J."/>
            <person name="Marsh P."/>
            <person name="Skipp P."/>
            <person name="O'Connor C.D."/>
            <person name="Goodhead I."/>
            <person name="Norbertzcak H."/>
            <person name="Harris B."/>
            <person name="Ormond D."/>
            <person name="Rance R."/>
            <person name="Quail M.A."/>
            <person name="Parkhill J."/>
            <person name="Stephens R.S."/>
            <person name="Clarke I.N."/>
        </authorList>
    </citation>
    <scope>NUCLEOTIDE SEQUENCE [LARGE SCALE GENOMIC DNA]</scope>
    <source>
        <strain>ATCC VR-902B / DSM 19102 / 434/Bu</strain>
    </source>
</reference>
<evidence type="ECO:0000256" key="1">
    <source>
        <dbReference type="SAM" id="MobiDB-lite"/>
    </source>
</evidence>
<evidence type="ECO:0000269" key="2">
    <source>
    </source>
</evidence>
<evidence type="ECO:0000305" key="3"/>
<keyword id="KW-0903">Direct protein sequencing</keyword>
<keyword id="KW-0238">DNA-binding</keyword>
<keyword id="KW-0677">Repeat</keyword>
<comment type="function">
    <text>Might have a role analogous to that of eukaryotic histone proteins.</text>
</comment>
<comment type="developmental stage">
    <text>Specific to the EB (elementary body) form in the life cycle of chlamydiae.</text>
</comment>
<comment type="similarity">
    <text evidence="3">Belongs to the histone H1/H5 family. HCT subfamily.</text>
</comment>
<gene>
    <name type="primary">hctA</name>
    <name type="ordered locus">CTL0112</name>
</gene>
<name>HCT1_CHLT2</name>
<accession>B0B8W9</accession>
<accession>O84748</accession>
<accession>Q02281</accession>
<accession>Q9R5S5</accession>
<dbReference type="EMBL" id="X57311">
    <property type="protein sequence ID" value="CAA40563.1"/>
    <property type="molecule type" value="Genomic_DNA"/>
</dbReference>
<dbReference type="EMBL" id="M60902">
    <property type="protein sequence ID" value="AAA23129.1"/>
    <property type="molecule type" value="Genomic_DNA"/>
</dbReference>
<dbReference type="EMBL" id="AM884176">
    <property type="protein sequence ID" value="CAP03556.1"/>
    <property type="molecule type" value="Genomic_DNA"/>
</dbReference>
<dbReference type="PIR" id="A39396">
    <property type="entry name" value="A39396"/>
</dbReference>
<dbReference type="RefSeq" id="WP_009873344.1">
    <property type="nucleotide sequence ID" value="NC_010287.1"/>
</dbReference>
<dbReference type="RefSeq" id="YP_001654203.1">
    <property type="nucleotide sequence ID" value="NC_010287.1"/>
</dbReference>
<dbReference type="SMR" id="B0B8W9"/>
<dbReference type="KEGG" id="ctb:CTL0112"/>
<dbReference type="PATRIC" id="fig|471472.4.peg.122"/>
<dbReference type="HOGENOM" id="CLU_148744_0_0_0"/>
<dbReference type="Proteomes" id="UP001154402">
    <property type="component" value="Chromosome"/>
</dbReference>
<dbReference type="GO" id="GO:0003677">
    <property type="term" value="F:DNA binding"/>
    <property type="evidence" value="ECO:0007669"/>
    <property type="project" value="UniProtKB-KW"/>
</dbReference>
<dbReference type="GO" id="GO:0030527">
    <property type="term" value="F:structural constituent of chromatin"/>
    <property type="evidence" value="ECO:0007669"/>
    <property type="project" value="InterPro"/>
</dbReference>
<dbReference type="InterPro" id="IPR010886">
    <property type="entry name" value="Hc1"/>
</dbReference>
<dbReference type="Pfam" id="PF07432">
    <property type="entry name" value="Hc1"/>
    <property type="match status" value="1"/>
</dbReference>
<proteinExistence type="evidence at protein level"/>
<organism>
    <name type="scientific">Chlamydia trachomatis serovar L2 (strain ATCC VR-902B / DSM 19102 / 434/Bu)</name>
    <dbReference type="NCBI Taxonomy" id="471472"/>
    <lineage>
        <taxon>Bacteria</taxon>
        <taxon>Pseudomonadati</taxon>
        <taxon>Chlamydiota</taxon>
        <taxon>Chlamydiia</taxon>
        <taxon>Chlamydiales</taxon>
        <taxon>Chlamydiaceae</taxon>
        <taxon>Chlamydia/Chlamydophila group</taxon>
        <taxon>Chlamydia</taxon>
    </lineage>
</organism>